<accession>A0B8Q1</accession>
<evidence type="ECO:0000255" key="1">
    <source>
        <dbReference type="HAMAP-Rule" id="MF_01079"/>
    </source>
</evidence>
<sequence>MIREYFRLHQTIATIVARSQEHIEIAKSAIIDSRTQLEEFIAFDPLFQLTLVPYDLPVDNAPPIVKRMCHASSLFHVGPMAAVAGAIAAFAVEAMVEAGADYAVVDNGGDIAIFSDEPLLVGIYAGSSPIKNLALEIHPTGGILGVCSSSGTIGPSISFGCADVATVISRDPAIADAGATALGNAVTPDASLKECFSVVDRDEVIGALIIRGDEMAVWGEVPPIRRARVKYDLITKG</sequence>
<organism>
    <name type="scientific">Methanothrix thermoacetophila (strain DSM 6194 / JCM 14653 / NBRC 101360 / PT)</name>
    <name type="common">Methanosaeta thermophila</name>
    <dbReference type="NCBI Taxonomy" id="349307"/>
    <lineage>
        <taxon>Archaea</taxon>
        <taxon>Methanobacteriati</taxon>
        <taxon>Methanobacteriota</taxon>
        <taxon>Stenosarchaea group</taxon>
        <taxon>Methanomicrobia</taxon>
        <taxon>Methanotrichales</taxon>
        <taxon>Methanotrichaceae</taxon>
        <taxon>Methanothrix</taxon>
    </lineage>
</organism>
<proteinExistence type="inferred from homology"/>
<feature type="chain" id="PRO_0000366710" description="UPF0280 protein Mthe_1297">
    <location>
        <begin position="1"/>
        <end position="237"/>
    </location>
</feature>
<gene>
    <name type="ordered locus">Mthe_1297</name>
</gene>
<keyword id="KW-1185">Reference proteome</keyword>
<name>Y1297_METTP</name>
<comment type="similarity">
    <text evidence="1">Belongs to the UPF0280 family.</text>
</comment>
<protein>
    <recommendedName>
        <fullName evidence="1">UPF0280 protein Mthe_1297</fullName>
    </recommendedName>
</protein>
<reference key="1">
    <citation type="submission" date="2006-10" db="EMBL/GenBank/DDBJ databases">
        <title>Complete sequence of Methanosaeta thermophila PT.</title>
        <authorList>
            <consortium name="US DOE Joint Genome Institute"/>
            <person name="Copeland A."/>
            <person name="Lucas S."/>
            <person name="Lapidus A."/>
            <person name="Barry K."/>
            <person name="Detter J.C."/>
            <person name="Glavina del Rio T."/>
            <person name="Hammon N."/>
            <person name="Israni S."/>
            <person name="Pitluck S."/>
            <person name="Chain P."/>
            <person name="Malfatti S."/>
            <person name="Shin M."/>
            <person name="Vergez L."/>
            <person name="Schmutz J."/>
            <person name="Larimer F."/>
            <person name="Land M."/>
            <person name="Hauser L."/>
            <person name="Kyrpides N."/>
            <person name="Kim E."/>
            <person name="Smith K.S."/>
            <person name="Ingram-Smith C."/>
            <person name="Richardson P."/>
        </authorList>
    </citation>
    <scope>NUCLEOTIDE SEQUENCE [LARGE SCALE GENOMIC DNA]</scope>
    <source>
        <strain>DSM 6194 / JCM 14653 / NBRC 101360 / PT</strain>
    </source>
</reference>
<dbReference type="EMBL" id="CP000477">
    <property type="protein sequence ID" value="ABK15075.1"/>
    <property type="molecule type" value="Genomic_DNA"/>
</dbReference>
<dbReference type="RefSeq" id="WP_011696467.1">
    <property type="nucleotide sequence ID" value="NC_008553.1"/>
</dbReference>
<dbReference type="SMR" id="A0B8Q1"/>
<dbReference type="STRING" id="349307.Mthe_1297"/>
<dbReference type="GeneID" id="4462938"/>
<dbReference type="KEGG" id="mtp:Mthe_1297"/>
<dbReference type="HOGENOM" id="CLU_074757_0_0_2"/>
<dbReference type="OrthoDB" id="50299at2157"/>
<dbReference type="Proteomes" id="UP000000674">
    <property type="component" value="Chromosome"/>
</dbReference>
<dbReference type="Gene3D" id="3.10.520.10">
    <property type="entry name" value="ApbE-like domains"/>
    <property type="match status" value="1"/>
</dbReference>
<dbReference type="HAMAP" id="MF_01079">
    <property type="entry name" value="UPF0280"/>
    <property type="match status" value="1"/>
</dbReference>
<dbReference type="InterPro" id="IPR003374">
    <property type="entry name" value="ApbE-like_sf"/>
</dbReference>
<dbReference type="InterPro" id="IPR037456">
    <property type="entry name" value="MA1715-like"/>
</dbReference>
<dbReference type="InterPro" id="IPR007183">
    <property type="entry name" value="UPF0280"/>
</dbReference>
<dbReference type="NCBIfam" id="NF003324">
    <property type="entry name" value="PRK04334.1-4"/>
    <property type="match status" value="1"/>
</dbReference>
<dbReference type="PIRSF" id="PIRSF006421">
    <property type="entry name" value="UCP006421"/>
    <property type="match status" value="1"/>
</dbReference>
<dbReference type="SUPFAM" id="SSF143631">
    <property type="entry name" value="ApbE-like"/>
    <property type="match status" value="1"/>
</dbReference>